<sequence>MGIKGLTKLLADNAPKSMKENKFESYFGRKIAIDASMSIYQFLIVVGRSGTEMLTNEAGEVTSHLQGMFSRTIRLLEAGIKPVYVFDGKPPDLKKQELAKRYSKRAEATEDLSEALETANKEDIEKFSKRTVKVTKQHNDDCKRLLRLMGVPVVEAPSEAEAQCAALCKAGKVYGVVSEDMDSLTFGAPKFLRHLMDPSSKKIPVMEFEVAKILEELNMTMDQFIDLCILSGCDYCDSIRGIGGLTALKLIRQHGSIENIPENLNKERYQIPDNWPYQEARRLFKEPLVITDEKELDIKWSSPDEEGLITFLVNENGFNRDRVTKAIEKIKVAKNKSSQGRLESFFKPTANPSVPIKRKETPVNNAKETNKKTKAGGGKKKK</sequence>
<accession>C6TEX6</accession>
<proteinExistence type="evidence at transcript level"/>
<reference key="1">
    <citation type="submission" date="2009-08" db="EMBL/GenBank/DDBJ databases">
        <authorList>
            <person name="Cheung F."/>
            <person name="Xiao Y."/>
            <person name="Chan A."/>
            <person name="Moskal W."/>
            <person name="Town C.D."/>
        </authorList>
    </citation>
    <scope>NUCLEOTIDE SEQUENCE [MRNA]</scope>
</reference>
<comment type="function">
    <text evidence="1">Structure-specific nuclease with 5'-flap endonuclease and 5'-3' exonuclease activities involved in DNA replication and repair. During DNA replication, cleaves the 5'-overhanging flap structure that is generated by displacement synthesis when DNA polymerase encounters the 5'-end of a downstream Okazaki fragment. It enters the flap from the 5'-end and then tracks to cleave the flap base, leaving a nick for ligation. Also involved in the long patch base excision repair (LP-BER) pathway, by cleaving within the apurinic/apyrimidinic (AP) site-terminated flap. Acts as a genome stabilization factor that prevents flaps from equilibrating into structures that lead to duplications and deletions. Also possesses 5'-3' exonuclease activity on nicked or gapped double-stranded DNA, and exhibits RNase H activity. Also involved in replication and repair of rDNA and in repairing mitochondrial DNA.</text>
</comment>
<comment type="cofactor">
    <cofactor evidence="1">
        <name>Mg(2+)</name>
        <dbReference type="ChEBI" id="CHEBI:18420"/>
    </cofactor>
    <text evidence="1">Binds 2 magnesium ions per subunit. They probably participate in the reaction catalyzed by the enzyme. May bind an additional third magnesium ion after substrate binding.</text>
</comment>
<comment type="subunit">
    <text evidence="1">Interacts with PCNA. Three molecules of FEN1 bind to one PCNA trimer with each molecule binding to one PCNA monomer. PCNA stimulates the nuclease activity without altering cleavage specificity.</text>
</comment>
<comment type="subcellular location">
    <subcellularLocation>
        <location evidence="1">Nucleus</location>
        <location evidence="1">Nucleolus</location>
    </subcellularLocation>
    <subcellularLocation>
        <location evidence="1">Nucleus</location>
        <location evidence="1">Nucleoplasm</location>
    </subcellularLocation>
    <subcellularLocation>
        <location evidence="1">Mitochondrion</location>
    </subcellularLocation>
    <text evidence="1">Resides mostly in the nucleoli and relocalizes to the nucleoplasm upon DNA damage.</text>
</comment>
<comment type="PTM">
    <text evidence="1">Phosphorylated. Phosphorylation upon DNA damage induces relocalization to the nuclear plasma.</text>
</comment>
<comment type="similarity">
    <text evidence="1">Belongs to the XPG/RAD2 endonuclease family. FEN1 subfamily.</text>
</comment>
<evidence type="ECO:0000255" key="1">
    <source>
        <dbReference type="HAMAP-Rule" id="MF_03140"/>
    </source>
</evidence>
<evidence type="ECO:0000256" key="2">
    <source>
        <dbReference type="SAM" id="MobiDB-lite"/>
    </source>
</evidence>
<dbReference type="EC" id="3.1.-.-" evidence="1"/>
<dbReference type="EMBL" id="BT096153">
    <property type="protein sequence ID" value="ACU20378.1"/>
    <property type="molecule type" value="mRNA"/>
</dbReference>
<dbReference type="RefSeq" id="NP_001242313.1">
    <property type="nucleotide sequence ID" value="NM_001255384.2"/>
</dbReference>
<dbReference type="SMR" id="C6TEX6"/>
<dbReference type="FunCoup" id="C6TEX6">
    <property type="interactions" value="5628"/>
</dbReference>
<dbReference type="STRING" id="3847.C6TEX6"/>
<dbReference type="PaxDb" id="3847-GLYMA10G28200.4"/>
<dbReference type="GeneID" id="100808044"/>
<dbReference type="KEGG" id="gmx:100808044"/>
<dbReference type="eggNOG" id="KOG2519">
    <property type="taxonomic scope" value="Eukaryota"/>
</dbReference>
<dbReference type="InParanoid" id="C6TEX6"/>
<dbReference type="OrthoDB" id="1937206at2759"/>
<dbReference type="Proteomes" id="UP000008827">
    <property type="component" value="Unplaced"/>
</dbReference>
<dbReference type="GO" id="GO:0005739">
    <property type="term" value="C:mitochondrion"/>
    <property type="evidence" value="ECO:0007669"/>
    <property type="project" value="UniProtKB-SubCell"/>
</dbReference>
<dbReference type="GO" id="GO:0005730">
    <property type="term" value="C:nucleolus"/>
    <property type="evidence" value="ECO:0007669"/>
    <property type="project" value="UniProtKB-SubCell"/>
</dbReference>
<dbReference type="GO" id="GO:0005654">
    <property type="term" value="C:nucleoplasm"/>
    <property type="evidence" value="ECO:0007669"/>
    <property type="project" value="UniProtKB-SubCell"/>
</dbReference>
<dbReference type="GO" id="GO:0008409">
    <property type="term" value="F:5'-3' exonuclease activity"/>
    <property type="evidence" value="ECO:0000318"/>
    <property type="project" value="GO_Central"/>
</dbReference>
<dbReference type="GO" id="GO:0017108">
    <property type="term" value="F:5'-flap endonuclease activity"/>
    <property type="evidence" value="ECO:0000318"/>
    <property type="project" value="GO_Central"/>
</dbReference>
<dbReference type="GO" id="GO:0003677">
    <property type="term" value="F:DNA binding"/>
    <property type="evidence" value="ECO:0007669"/>
    <property type="project" value="UniProtKB-UniRule"/>
</dbReference>
<dbReference type="GO" id="GO:0000287">
    <property type="term" value="F:magnesium ion binding"/>
    <property type="evidence" value="ECO:0007669"/>
    <property type="project" value="UniProtKB-UniRule"/>
</dbReference>
<dbReference type="GO" id="GO:0006284">
    <property type="term" value="P:base-excision repair"/>
    <property type="evidence" value="ECO:0007669"/>
    <property type="project" value="UniProtKB-UniRule"/>
</dbReference>
<dbReference type="GO" id="GO:0043137">
    <property type="term" value="P:DNA replication, removal of RNA primer"/>
    <property type="evidence" value="ECO:0007669"/>
    <property type="project" value="UniProtKB-UniRule"/>
</dbReference>
<dbReference type="CDD" id="cd09907">
    <property type="entry name" value="H3TH_FEN1-Euk"/>
    <property type="match status" value="1"/>
</dbReference>
<dbReference type="CDD" id="cd09867">
    <property type="entry name" value="PIN_FEN1"/>
    <property type="match status" value="1"/>
</dbReference>
<dbReference type="FunFam" id="1.10.150.20:FF:000009">
    <property type="entry name" value="Flap endonuclease 1"/>
    <property type="match status" value="1"/>
</dbReference>
<dbReference type="FunFam" id="3.40.50.1010:FF:000015">
    <property type="entry name" value="Flap endonuclease 1"/>
    <property type="match status" value="1"/>
</dbReference>
<dbReference type="Gene3D" id="1.10.150.20">
    <property type="entry name" value="5' to 3' exonuclease, C-terminal subdomain"/>
    <property type="match status" value="1"/>
</dbReference>
<dbReference type="Gene3D" id="3.40.50.1010">
    <property type="entry name" value="5'-nuclease"/>
    <property type="match status" value="1"/>
</dbReference>
<dbReference type="HAMAP" id="MF_00614">
    <property type="entry name" value="Fen"/>
    <property type="match status" value="1"/>
</dbReference>
<dbReference type="InterPro" id="IPR002421">
    <property type="entry name" value="5-3_exonuclease"/>
</dbReference>
<dbReference type="InterPro" id="IPR036279">
    <property type="entry name" value="5-3_exonuclease_C_sf"/>
</dbReference>
<dbReference type="InterPro" id="IPR023426">
    <property type="entry name" value="Flap_endonuc"/>
</dbReference>
<dbReference type="InterPro" id="IPR008918">
    <property type="entry name" value="HhH2"/>
</dbReference>
<dbReference type="InterPro" id="IPR029060">
    <property type="entry name" value="PIN-like_dom_sf"/>
</dbReference>
<dbReference type="InterPro" id="IPR006086">
    <property type="entry name" value="XPG-I_dom"/>
</dbReference>
<dbReference type="InterPro" id="IPR006084">
    <property type="entry name" value="XPG/Rad2"/>
</dbReference>
<dbReference type="InterPro" id="IPR019974">
    <property type="entry name" value="XPG_CS"/>
</dbReference>
<dbReference type="InterPro" id="IPR006085">
    <property type="entry name" value="XPG_DNA_repair_N"/>
</dbReference>
<dbReference type="PANTHER" id="PTHR11081:SF9">
    <property type="entry name" value="FLAP ENDONUCLEASE 1"/>
    <property type="match status" value="1"/>
</dbReference>
<dbReference type="PANTHER" id="PTHR11081">
    <property type="entry name" value="FLAP ENDONUCLEASE FAMILY MEMBER"/>
    <property type="match status" value="1"/>
</dbReference>
<dbReference type="Pfam" id="PF00867">
    <property type="entry name" value="XPG_I"/>
    <property type="match status" value="1"/>
</dbReference>
<dbReference type="Pfam" id="PF00752">
    <property type="entry name" value="XPG_N"/>
    <property type="match status" value="1"/>
</dbReference>
<dbReference type="PRINTS" id="PR00853">
    <property type="entry name" value="XPGRADSUPER"/>
</dbReference>
<dbReference type="SMART" id="SM00475">
    <property type="entry name" value="53EXOc"/>
    <property type="match status" value="1"/>
</dbReference>
<dbReference type="SMART" id="SM00279">
    <property type="entry name" value="HhH2"/>
    <property type="match status" value="1"/>
</dbReference>
<dbReference type="SMART" id="SM00484">
    <property type="entry name" value="XPGI"/>
    <property type="match status" value="1"/>
</dbReference>
<dbReference type="SMART" id="SM00485">
    <property type="entry name" value="XPGN"/>
    <property type="match status" value="1"/>
</dbReference>
<dbReference type="SUPFAM" id="SSF47807">
    <property type="entry name" value="5' to 3' exonuclease, C-terminal subdomain"/>
    <property type="match status" value="1"/>
</dbReference>
<dbReference type="SUPFAM" id="SSF88723">
    <property type="entry name" value="PIN domain-like"/>
    <property type="match status" value="1"/>
</dbReference>
<dbReference type="PROSITE" id="PS00841">
    <property type="entry name" value="XPG_1"/>
    <property type="match status" value="1"/>
</dbReference>
<dbReference type="PROSITE" id="PS00842">
    <property type="entry name" value="XPG_2"/>
    <property type="match status" value="1"/>
</dbReference>
<organism>
    <name type="scientific">Glycine max</name>
    <name type="common">Soybean</name>
    <name type="synonym">Glycine hispida</name>
    <dbReference type="NCBI Taxonomy" id="3847"/>
    <lineage>
        <taxon>Eukaryota</taxon>
        <taxon>Viridiplantae</taxon>
        <taxon>Streptophyta</taxon>
        <taxon>Embryophyta</taxon>
        <taxon>Tracheophyta</taxon>
        <taxon>Spermatophyta</taxon>
        <taxon>Magnoliopsida</taxon>
        <taxon>eudicotyledons</taxon>
        <taxon>Gunneridae</taxon>
        <taxon>Pentapetalae</taxon>
        <taxon>rosids</taxon>
        <taxon>fabids</taxon>
        <taxon>Fabales</taxon>
        <taxon>Fabaceae</taxon>
        <taxon>Papilionoideae</taxon>
        <taxon>50 kb inversion clade</taxon>
        <taxon>NPAAA clade</taxon>
        <taxon>indigoferoid/millettioid clade</taxon>
        <taxon>Phaseoleae</taxon>
        <taxon>Glycine</taxon>
        <taxon>Glycine subgen. Soja</taxon>
    </lineage>
</organism>
<protein>
    <recommendedName>
        <fullName evidence="1">Flap endonuclease 1</fullName>
        <shortName evidence="1">FEN-1</shortName>
        <ecNumber evidence="1">3.1.-.-</ecNumber>
    </recommendedName>
    <alternativeName>
        <fullName evidence="1">Flap structure-specific endonuclease 1</fullName>
    </alternativeName>
</protein>
<name>FEN1_SOYBN</name>
<feature type="chain" id="PRO_0000403520" description="Flap endonuclease 1">
    <location>
        <begin position="1"/>
        <end position="382"/>
    </location>
</feature>
<feature type="region of interest" description="N-domain">
    <location>
        <begin position="1"/>
        <end position="105"/>
    </location>
</feature>
<feature type="region of interest" description="I-domain">
    <location>
        <begin position="123"/>
        <end position="254"/>
    </location>
</feature>
<feature type="region of interest" description="Interaction with PCNA" evidence="1">
    <location>
        <begin position="338"/>
        <end position="346"/>
    </location>
</feature>
<feature type="region of interest" description="Disordered" evidence="2">
    <location>
        <begin position="339"/>
        <end position="382"/>
    </location>
</feature>
<feature type="compositionally biased region" description="Basic residues" evidence="2">
    <location>
        <begin position="372"/>
        <end position="382"/>
    </location>
</feature>
<feature type="binding site" evidence="1">
    <location>
        <position position="34"/>
    </location>
    <ligand>
        <name>Mg(2+)</name>
        <dbReference type="ChEBI" id="CHEBI:18420"/>
        <label>1</label>
    </ligand>
</feature>
<feature type="binding site" evidence="1">
    <location>
        <position position="71"/>
    </location>
    <ligand>
        <name>DNA</name>
        <dbReference type="ChEBI" id="CHEBI:16991"/>
    </ligand>
</feature>
<feature type="binding site" evidence="1">
    <location>
        <position position="87"/>
    </location>
    <ligand>
        <name>Mg(2+)</name>
        <dbReference type="ChEBI" id="CHEBI:18420"/>
        <label>1</label>
    </ligand>
</feature>
<feature type="binding site" evidence="1">
    <location>
        <position position="159"/>
    </location>
    <ligand>
        <name>DNA</name>
        <dbReference type="ChEBI" id="CHEBI:16991"/>
    </ligand>
</feature>
<feature type="binding site" evidence="1">
    <location>
        <position position="159"/>
    </location>
    <ligand>
        <name>Mg(2+)</name>
        <dbReference type="ChEBI" id="CHEBI:18420"/>
        <label>1</label>
    </ligand>
</feature>
<feature type="binding site" evidence="1">
    <location>
        <position position="161"/>
    </location>
    <ligand>
        <name>Mg(2+)</name>
        <dbReference type="ChEBI" id="CHEBI:18420"/>
        <label>1</label>
    </ligand>
</feature>
<feature type="binding site" evidence="1">
    <location>
        <position position="180"/>
    </location>
    <ligand>
        <name>Mg(2+)</name>
        <dbReference type="ChEBI" id="CHEBI:18420"/>
        <label>2</label>
    </ligand>
</feature>
<feature type="binding site" evidence="1">
    <location>
        <position position="182"/>
    </location>
    <ligand>
        <name>Mg(2+)</name>
        <dbReference type="ChEBI" id="CHEBI:18420"/>
        <label>2</label>
    </ligand>
</feature>
<feature type="binding site" evidence="1">
    <location>
        <position position="232"/>
    </location>
    <ligand>
        <name>DNA</name>
        <dbReference type="ChEBI" id="CHEBI:16991"/>
    </ligand>
</feature>
<feature type="binding site" evidence="1">
    <location>
        <position position="234"/>
    </location>
    <ligand>
        <name>DNA</name>
        <dbReference type="ChEBI" id="CHEBI:16991"/>
    </ligand>
</feature>
<feature type="binding site" evidence="1">
    <location>
        <position position="234"/>
    </location>
    <ligand>
        <name>Mg(2+)</name>
        <dbReference type="ChEBI" id="CHEBI:18420"/>
        <label>2</label>
    </ligand>
</feature>
<keyword id="KW-0227">DNA damage</keyword>
<keyword id="KW-0234">DNA repair</keyword>
<keyword id="KW-0235">DNA replication</keyword>
<keyword id="KW-0255">Endonuclease</keyword>
<keyword id="KW-0269">Exonuclease</keyword>
<keyword id="KW-0378">Hydrolase</keyword>
<keyword id="KW-0460">Magnesium</keyword>
<keyword id="KW-0479">Metal-binding</keyword>
<keyword id="KW-0496">Mitochondrion</keyword>
<keyword id="KW-0540">Nuclease</keyword>
<keyword id="KW-0539">Nucleus</keyword>
<keyword id="KW-0597">Phosphoprotein</keyword>
<keyword id="KW-1185">Reference proteome</keyword>
<gene>
    <name evidence="1" type="primary">FEN1</name>
</gene>